<protein>
    <recommendedName>
        <fullName>Ankyrin repeat, PH and SEC7 domain containing protein secG</fullName>
    </recommendedName>
</protein>
<evidence type="ECO:0000255" key="1">
    <source>
        <dbReference type="PROSITE-ProRule" id="PRU00145"/>
    </source>
</evidence>
<evidence type="ECO:0000255" key="2">
    <source>
        <dbReference type="PROSITE-ProRule" id="PRU00189"/>
    </source>
</evidence>
<evidence type="ECO:0000256" key="3">
    <source>
        <dbReference type="SAM" id="MobiDB-lite"/>
    </source>
</evidence>
<evidence type="ECO:0000305" key="4"/>
<reference key="1">
    <citation type="journal article" date="2005" name="Nature">
        <title>The genome of the social amoeba Dictyostelium discoideum.</title>
        <authorList>
            <person name="Eichinger L."/>
            <person name="Pachebat J.A."/>
            <person name="Gloeckner G."/>
            <person name="Rajandream M.A."/>
            <person name="Sucgang R."/>
            <person name="Berriman M."/>
            <person name="Song J."/>
            <person name="Olsen R."/>
            <person name="Szafranski K."/>
            <person name="Xu Q."/>
            <person name="Tunggal B."/>
            <person name="Kummerfeld S."/>
            <person name="Madera M."/>
            <person name="Konfortov B.A."/>
            <person name="Rivero F."/>
            <person name="Bankier A.T."/>
            <person name="Lehmann R."/>
            <person name="Hamlin N."/>
            <person name="Davies R."/>
            <person name="Gaudet P."/>
            <person name="Fey P."/>
            <person name="Pilcher K."/>
            <person name="Chen G."/>
            <person name="Saunders D."/>
            <person name="Sodergren E.J."/>
            <person name="Davis P."/>
            <person name="Kerhornou A."/>
            <person name="Nie X."/>
            <person name="Hall N."/>
            <person name="Anjard C."/>
            <person name="Hemphill L."/>
            <person name="Bason N."/>
            <person name="Farbrother P."/>
            <person name="Desany B."/>
            <person name="Just E."/>
            <person name="Morio T."/>
            <person name="Rost R."/>
            <person name="Churcher C.M."/>
            <person name="Cooper J."/>
            <person name="Haydock S."/>
            <person name="van Driessche N."/>
            <person name="Cronin A."/>
            <person name="Goodhead I."/>
            <person name="Muzny D.M."/>
            <person name="Mourier T."/>
            <person name="Pain A."/>
            <person name="Lu M."/>
            <person name="Harper D."/>
            <person name="Lindsay R."/>
            <person name="Hauser H."/>
            <person name="James K.D."/>
            <person name="Quiles M."/>
            <person name="Madan Babu M."/>
            <person name="Saito T."/>
            <person name="Buchrieser C."/>
            <person name="Wardroper A."/>
            <person name="Felder M."/>
            <person name="Thangavelu M."/>
            <person name="Johnson D."/>
            <person name="Knights A."/>
            <person name="Loulseged H."/>
            <person name="Mungall K.L."/>
            <person name="Oliver K."/>
            <person name="Price C."/>
            <person name="Quail M.A."/>
            <person name="Urushihara H."/>
            <person name="Hernandez J."/>
            <person name="Rabbinowitsch E."/>
            <person name="Steffen D."/>
            <person name="Sanders M."/>
            <person name="Ma J."/>
            <person name="Kohara Y."/>
            <person name="Sharp S."/>
            <person name="Simmonds M.N."/>
            <person name="Spiegler S."/>
            <person name="Tivey A."/>
            <person name="Sugano S."/>
            <person name="White B."/>
            <person name="Walker D."/>
            <person name="Woodward J.R."/>
            <person name="Winckler T."/>
            <person name="Tanaka Y."/>
            <person name="Shaulsky G."/>
            <person name="Schleicher M."/>
            <person name="Weinstock G.M."/>
            <person name="Rosenthal A."/>
            <person name="Cox E.C."/>
            <person name="Chisholm R.L."/>
            <person name="Gibbs R.A."/>
            <person name="Loomis W.F."/>
            <person name="Platzer M."/>
            <person name="Kay R.R."/>
            <person name="Williams J.G."/>
            <person name="Dear P.H."/>
            <person name="Noegel A.A."/>
            <person name="Barrell B.G."/>
            <person name="Kuspa A."/>
        </authorList>
    </citation>
    <scope>NUCLEOTIDE SEQUENCE [LARGE SCALE GENOMIC DNA]</scope>
    <source>
        <strain>AX4</strain>
    </source>
</reference>
<reference key="2">
    <citation type="submission" date="1996-11" db="EMBL/GenBank/DDBJ databases">
        <authorList>
            <person name="Loomis W.F."/>
            <person name="Iranfar N."/>
        </authorList>
    </citation>
    <scope>NUCLEOTIDE SEQUENCE [MRNA] OF 756-980</scope>
    <source>
        <strain>AX4</strain>
    </source>
</reference>
<comment type="sequence caution" evidence="4">
    <conflict type="frameshift">
        <sequence resource="EMBL-CDS" id="AAB36958"/>
    </conflict>
</comment>
<keyword id="KW-0040">ANK repeat</keyword>
<keyword id="KW-1185">Reference proteome</keyword>
<keyword id="KW-0677">Repeat</keyword>
<gene>
    <name type="primary">secG</name>
    <name type="ORF">DDB_G0287459</name>
</gene>
<dbReference type="EMBL" id="AAFI02000101">
    <property type="protein sequence ID" value="EAL63695.1"/>
    <property type="molecule type" value="Genomic_DNA"/>
</dbReference>
<dbReference type="EMBL" id="U78755">
    <property type="protein sequence ID" value="AAB36958.1"/>
    <property type="status" value="ALT_FRAME"/>
    <property type="molecule type" value="mRNA"/>
</dbReference>
<dbReference type="RefSeq" id="XP_637214.1">
    <property type="nucleotide sequence ID" value="XM_632122.1"/>
</dbReference>
<dbReference type="SMR" id="Q54KA7"/>
<dbReference type="FunCoup" id="Q54KA7">
    <property type="interactions" value="273"/>
</dbReference>
<dbReference type="STRING" id="44689.Q54KA7"/>
<dbReference type="PaxDb" id="44689-DDB0191439"/>
<dbReference type="EnsemblProtists" id="EAL63695">
    <property type="protein sequence ID" value="EAL63695"/>
    <property type="gene ID" value="DDB_G0287459"/>
</dbReference>
<dbReference type="GeneID" id="8626150"/>
<dbReference type="KEGG" id="ddi:DDB_G0287459"/>
<dbReference type="dictyBase" id="DDB_G0287459">
    <property type="gene designation" value="secG"/>
</dbReference>
<dbReference type="VEuPathDB" id="AmoebaDB:DDB_G0287459"/>
<dbReference type="eggNOG" id="KOG0930">
    <property type="taxonomic scope" value="Eukaryota"/>
</dbReference>
<dbReference type="eggNOG" id="KOG4177">
    <property type="taxonomic scope" value="Eukaryota"/>
</dbReference>
<dbReference type="HOGENOM" id="CLU_302561_0_0_1"/>
<dbReference type="InParanoid" id="Q54KA7"/>
<dbReference type="OMA" id="FNGRSKC"/>
<dbReference type="PhylomeDB" id="Q54KA7"/>
<dbReference type="PRO" id="PR:Q54KA7"/>
<dbReference type="Proteomes" id="UP000002195">
    <property type="component" value="Chromosome 5"/>
</dbReference>
<dbReference type="GO" id="GO:0005829">
    <property type="term" value="C:cytosol"/>
    <property type="evidence" value="ECO:0000314"/>
    <property type="project" value="dictyBase"/>
</dbReference>
<dbReference type="GO" id="GO:0005764">
    <property type="term" value="C:lysosome"/>
    <property type="evidence" value="ECO:0000314"/>
    <property type="project" value="dictyBase"/>
</dbReference>
<dbReference type="GO" id="GO:0005085">
    <property type="term" value="F:guanyl-nucleotide exchange factor activity"/>
    <property type="evidence" value="ECO:0007669"/>
    <property type="project" value="InterPro"/>
</dbReference>
<dbReference type="GO" id="GO:0030036">
    <property type="term" value="P:actin cytoskeleton organization"/>
    <property type="evidence" value="ECO:0000315"/>
    <property type="project" value="dictyBase"/>
</dbReference>
<dbReference type="GO" id="GO:0031589">
    <property type="term" value="P:cell-substrate adhesion"/>
    <property type="evidence" value="ECO:0000315"/>
    <property type="project" value="dictyBase"/>
</dbReference>
<dbReference type="GO" id="GO:0006935">
    <property type="term" value="P:chemotaxis"/>
    <property type="evidence" value="ECO:0000315"/>
    <property type="project" value="dictyBase"/>
</dbReference>
<dbReference type="GO" id="GO:0043327">
    <property type="term" value="P:chemotaxis to cAMP"/>
    <property type="evidence" value="ECO:0000315"/>
    <property type="project" value="dictyBase"/>
</dbReference>
<dbReference type="GO" id="GO:0031154">
    <property type="term" value="P:culmination involved in sorocarp development"/>
    <property type="evidence" value="ECO:0000315"/>
    <property type="project" value="dictyBase"/>
</dbReference>
<dbReference type="GO" id="GO:0032012">
    <property type="term" value="P:regulation of ARF protein signal transduction"/>
    <property type="evidence" value="ECO:0007669"/>
    <property type="project" value="InterPro"/>
</dbReference>
<dbReference type="CDD" id="cd01252">
    <property type="entry name" value="PH_GRP1-like"/>
    <property type="match status" value="1"/>
</dbReference>
<dbReference type="CDD" id="cd00171">
    <property type="entry name" value="Sec7"/>
    <property type="match status" value="1"/>
</dbReference>
<dbReference type="FunFam" id="1.25.40.20:FF:001049">
    <property type="entry name" value="Ankyrin repeat, PH and SEC7 domain containing protein secG"/>
    <property type="match status" value="1"/>
</dbReference>
<dbReference type="FunFam" id="1.10.1000.11:FF:000003">
    <property type="entry name" value="Brefeldin A-inhibited guanine nucleotide-exchange protein 1"/>
    <property type="match status" value="1"/>
</dbReference>
<dbReference type="FunFam" id="1.10.220.20:FF:000002">
    <property type="entry name" value="Brefeldin A-inhibited guanine nucleotide-exchange protein 1"/>
    <property type="match status" value="1"/>
</dbReference>
<dbReference type="FunFam" id="2.30.29.30:FF:000700">
    <property type="entry name" value="Probable serine/threonine-protein kinase DDB_G0272282"/>
    <property type="match status" value="1"/>
</dbReference>
<dbReference type="Gene3D" id="1.10.220.20">
    <property type="match status" value="1"/>
</dbReference>
<dbReference type="Gene3D" id="1.25.40.20">
    <property type="entry name" value="Ankyrin repeat-containing domain"/>
    <property type="match status" value="4"/>
</dbReference>
<dbReference type="Gene3D" id="1.10.1000.11">
    <property type="entry name" value="Arf Nucleotide-binding Site Opener,domain 2"/>
    <property type="match status" value="1"/>
</dbReference>
<dbReference type="Gene3D" id="2.30.29.30">
    <property type="entry name" value="Pleckstrin-homology domain (PH domain)/Phosphotyrosine-binding domain (PTB)"/>
    <property type="match status" value="1"/>
</dbReference>
<dbReference type="InterPro" id="IPR002110">
    <property type="entry name" value="Ankyrin_rpt"/>
</dbReference>
<dbReference type="InterPro" id="IPR036770">
    <property type="entry name" value="Ankyrin_rpt-contain_sf"/>
</dbReference>
<dbReference type="InterPro" id="IPR011993">
    <property type="entry name" value="PH-like_dom_sf"/>
</dbReference>
<dbReference type="InterPro" id="IPR001849">
    <property type="entry name" value="PH_domain"/>
</dbReference>
<dbReference type="InterPro" id="IPR023394">
    <property type="entry name" value="Sec7_C_sf"/>
</dbReference>
<dbReference type="InterPro" id="IPR000904">
    <property type="entry name" value="Sec7_dom"/>
</dbReference>
<dbReference type="InterPro" id="IPR035999">
    <property type="entry name" value="Sec7_dom_sf"/>
</dbReference>
<dbReference type="PANTHER" id="PTHR24173">
    <property type="entry name" value="ANKYRIN REPEAT CONTAINING"/>
    <property type="match status" value="1"/>
</dbReference>
<dbReference type="PANTHER" id="PTHR24173:SF74">
    <property type="entry name" value="ANKYRIN REPEAT DOMAIN-CONTAINING PROTEIN 16"/>
    <property type="match status" value="1"/>
</dbReference>
<dbReference type="Pfam" id="PF00023">
    <property type="entry name" value="Ank"/>
    <property type="match status" value="1"/>
</dbReference>
<dbReference type="Pfam" id="PF12796">
    <property type="entry name" value="Ank_2"/>
    <property type="match status" value="5"/>
</dbReference>
<dbReference type="Pfam" id="PF00169">
    <property type="entry name" value="PH"/>
    <property type="match status" value="1"/>
</dbReference>
<dbReference type="Pfam" id="PF01369">
    <property type="entry name" value="Sec7"/>
    <property type="match status" value="1"/>
</dbReference>
<dbReference type="PRINTS" id="PR01415">
    <property type="entry name" value="ANKYRIN"/>
</dbReference>
<dbReference type="SMART" id="SM00248">
    <property type="entry name" value="ANK"/>
    <property type="match status" value="15"/>
</dbReference>
<dbReference type="SMART" id="SM00233">
    <property type="entry name" value="PH"/>
    <property type="match status" value="1"/>
</dbReference>
<dbReference type="SMART" id="SM00222">
    <property type="entry name" value="Sec7"/>
    <property type="match status" value="1"/>
</dbReference>
<dbReference type="SUPFAM" id="SSF48403">
    <property type="entry name" value="Ankyrin repeat"/>
    <property type="match status" value="2"/>
</dbReference>
<dbReference type="SUPFAM" id="SSF50729">
    <property type="entry name" value="PH domain-like"/>
    <property type="match status" value="1"/>
</dbReference>
<dbReference type="SUPFAM" id="SSF48425">
    <property type="entry name" value="Sec7 domain"/>
    <property type="match status" value="1"/>
</dbReference>
<dbReference type="PROSITE" id="PS50297">
    <property type="entry name" value="ANK_REP_REGION"/>
    <property type="match status" value="1"/>
</dbReference>
<dbReference type="PROSITE" id="PS50088">
    <property type="entry name" value="ANK_REPEAT"/>
    <property type="match status" value="13"/>
</dbReference>
<dbReference type="PROSITE" id="PS50003">
    <property type="entry name" value="PH_DOMAIN"/>
    <property type="match status" value="1"/>
</dbReference>
<dbReference type="PROSITE" id="PS50190">
    <property type="entry name" value="SEC7"/>
    <property type="match status" value="1"/>
</dbReference>
<proteinExistence type="evidence at transcript level"/>
<organism>
    <name type="scientific">Dictyostelium discoideum</name>
    <name type="common">Social amoeba</name>
    <dbReference type="NCBI Taxonomy" id="44689"/>
    <lineage>
        <taxon>Eukaryota</taxon>
        <taxon>Amoebozoa</taxon>
        <taxon>Evosea</taxon>
        <taxon>Eumycetozoa</taxon>
        <taxon>Dictyostelia</taxon>
        <taxon>Dictyosteliales</taxon>
        <taxon>Dictyosteliaceae</taxon>
        <taxon>Dictyostelium</taxon>
    </lineage>
</organism>
<name>SECG_DICDI</name>
<accession>Q54KA7</accession>
<accession>P90525</accession>
<sequence length="986" mass="107523">MGSTSNSTKNTGSTTTTTTTAAPATTAKHSNSAPTRPSVHYYSSTGDIEKLSNLLNNSATSPDTPDSEKRTPLHHAAFCGSAACVNFLLDKKANANIKDSAGNTPLQWASSRGHLECIKLLVEKGGVDVNTKDDKNGTPLHKASLFASAECVLYLLNGKADPRAVTTNGETPLHHASAGGNPQCVELLIKADSKVNAVDNDCITPLHQASFSGHSSCVSLLLKKGAKVDPRDIHGISPLHNAASAGYVDCVEQLVRNGENINCVDIEGVTPLHHTCFNGNLQLTKRLIELGAKINMVDEMGETPLHKAAFNGHKEVCEYLLYLDPTMIDCRDSRQSTSLHLAAFNGLLDMVDLLIRYKAQINIKDEEGATPLHKASFNGHSSCAKLLVDKGAPICIVDSQGATPLHKAAFNGRSKCLATLIRSGAELEVKDSQGGTPLHNAAYNGHSDCCRILLKKGANVNAVDTHSSTPLHLASAAGARDTVDVLIQFKARIDAKNFAGKTPLVYAIKKNHSDVARVLIRAGADLDQVSLRSSVDFTKTFGTENHDEIYQIVNKRESSNHEVDELQLALEQQAKEDMEQLAAEKQKLLLIKAAIAQFNSHPKKGIEFIVANGVISEKNPKEVAHFLLTHSELSKQSIGEYIGEGDDFNLQVLHAFVDELNFFGLDFDVALRKYLLTFRLPGEAQKIDRMMEKFASQFYQHNPENKVFVNQDAVYVLAFSVIMLNTDAHNPNIKKKMTKAEFLRNNSGINSGDDLPPDFMENLYDKIVTNEIKMERDGNQANQHVEKKGWLTKQGGRIKTWKKRWFILTANCLLYYKTPQDHEPCGIIPLENVVVTIDPQKKFCFMLHSSQEQMKACKLNSDGTLVQANHAAYFIAAANMAEMDSWVQSIKSNIHSNPNFEQLLKRKAETIRGRGKVSTKPIQNRKQTISGPPPSTTTTTTSTASNNVTSVGSPPNSGSVLNSSGSKPVTFSSTSSPVQQQTSALS</sequence>
<feature type="chain" id="PRO_0000334489" description="Ankyrin repeat, PH and SEC7 domain containing protein secG">
    <location>
        <begin position="1"/>
        <end position="986"/>
    </location>
</feature>
<feature type="repeat" description="ANK 1">
    <location>
        <begin position="34"/>
        <end position="63"/>
    </location>
</feature>
<feature type="repeat" description="ANK 2">
    <location>
        <begin position="68"/>
        <end position="97"/>
    </location>
</feature>
<feature type="repeat" description="ANK 3">
    <location>
        <begin position="101"/>
        <end position="131"/>
    </location>
</feature>
<feature type="repeat" description="ANK 4">
    <location>
        <begin position="135"/>
        <end position="164"/>
    </location>
</feature>
<feature type="repeat" description="ANK 5">
    <location>
        <begin position="168"/>
        <end position="197"/>
    </location>
</feature>
<feature type="repeat" description="ANK 6">
    <location>
        <begin position="201"/>
        <end position="230"/>
    </location>
</feature>
<feature type="repeat" description="ANK 7">
    <location>
        <begin position="234"/>
        <end position="263"/>
    </location>
</feature>
<feature type="repeat" description="ANK 8">
    <location>
        <begin position="267"/>
        <end position="296"/>
    </location>
</feature>
<feature type="repeat" description="ANK 9">
    <location>
        <begin position="300"/>
        <end position="329"/>
    </location>
</feature>
<feature type="repeat" description="ANK 10">
    <location>
        <begin position="334"/>
        <end position="363"/>
    </location>
</feature>
<feature type="repeat" description="ANK 11">
    <location>
        <begin position="367"/>
        <end position="396"/>
    </location>
</feature>
<feature type="repeat" description="ANK 12">
    <location>
        <begin position="400"/>
        <end position="429"/>
    </location>
</feature>
<feature type="repeat" description="ANK 13">
    <location>
        <begin position="433"/>
        <end position="462"/>
    </location>
</feature>
<feature type="repeat" description="ANK 14">
    <location>
        <begin position="466"/>
        <end position="495"/>
    </location>
</feature>
<feature type="repeat" description="ANK 15">
    <location>
        <begin position="499"/>
        <end position="528"/>
    </location>
</feature>
<feature type="domain" description="SEC7" evidence="2">
    <location>
        <begin position="580"/>
        <end position="770"/>
    </location>
</feature>
<feature type="domain" description="PH" evidence="1">
    <location>
        <begin position="784"/>
        <end position="895"/>
    </location>
</feature>
<feature type="region of interest" description="Disordered" evidence="3">
    <location>
        <begin position="1"/>
        <end position="43"/>
    </location>
</feature>
<feature type="region of interest" description="Disordered" evidence="3">
    <location>
        <begin position="911"/>
        <end position="986"/>
    </location>
</feature>
<feature type="compositionally biased region" description="Low complexity" evidence="3">
    <location>
        <begin position="1"/>
        <end position="28"/>
    </location>
</feature>
<feature type="compositionally biased region" description="Polar residues" evidence="3">
    <location>
        <begin position="29"/>
        <end position="43"/>
    </location>
</feature>
<feature type="compositionally biased region" description="Polar residues" evidence="3">
    <location>
        <begin position="920"/>
        <end position="929"/>
    </location>
</feature>
<feature type="compositionally biased region" description="Low complexity" evidence="3">
    <location>
        <begin position="936"/>
        <end position="953"/>
    </location>
</feature>
<feature type="compositionally biased region" description="Low complexity" evidence="3">
    <location>
        <begin position="963"/>
        <end position="986"/>
    </location>
</feature>